<proteinExistence type="evidence at protein level"/>
<accession>P81655</accession>
<organism>
    <name type="scientific">Oryctolagus cuniculus</name>
    <name type="common">Rabbit</name>
    <dbReference type="NCBI Taxonomy" id="9986"/>
    <lineage>
        <taxon>Eukaryota</taxon>
        <taxon>Metazoa</taxon>
        <taxon>Chordata</taxon>
        <taxon>Craniata</taxon>
        <taxon>Vertebrata</taxon>
        <taxon>Euteleostomi</taxon>
        <taxon>Mammalia</taxon>
        <taxon>Eutheria</taxon>
        <taxon>Euarchontoglires</taxon>
        <taxon>Glires</taxon>
        <taxon>Lagomorpha</taxon>
        <taxon>Leporidae</taxon>
        <taxon>Oryctolagus</taxon>
    </lineage>
</organism>
<dbReference type="PDB" id="1EWS">
    <property type="method" value="NMR"/>
    <property type="chains" value="A=1-32"/>
</dbReference>
<dbReference type="PDBsum" id="1EWS"/>
<dbReference type="SMR" id="P81655"/>
<dbReference type="PaxDb" id="9986-ENSOCUP00000016855"/>
<dbReference type="HOGENOM" id="CLU_3394175_0_0_1"/>
<dbReference type="InParanoid" id="P81655"/>
<dbReference type="EvolutionaryTrace" id="P81655"/>
<dbReference type="Proteomes" id="UP000001811">
    <property type="component" value="Unplaced"/>
</dbReference>
<dbReference type="GO" id="GO:0005576">
    <property type="term" value="C:extracellular region"/>
    <property type="evidence" value="ECO:0007669"/>
    <property type="project" value="UniProtKB-SubCell"/>
</dbReference>
<dbReference type="GO" id="GO:0042742">
    <property type="term" value="P:defense response to bacterium"/>
    <property type="evidence" value="ECO:0007669"/>
    <property type="project" value="UniProtKB-KW"/>
</dbReference>
<dbReference type="InterPro" id="IPR041002">
    <property type="entry name" value="Defensin_RK-1"/>
</dbReference>
<dbReference type="Pfam" id="PF17860">
    <property type="entry name" value="Defensin_RK-1"/>
    <property type="match status" value="1"/>
</dbReference>
<dbReference type="SUPFAM" id="SSF57392">
    <property type="entry name" value="Defensin-like"/>
    <property type="match status" value="1"/>
</dbReference>
<name>RK1_RABIT</name>
<protein>
    <recommendedName>
        <fullName>Corticostatin-related peptide RK-1</fullName>
    </recommendedName>
</protein>
<evidence type="ECO:0000269" key="1">
    <source>
    </source>
</evidence>
<evidence type="ECO:0000305" key="2"/>
<evidence type="ECO:0007829" key="3">
    <source>
        <dbReference type="PDB" id="1EWS"/>
    </source>
</evidence>
<comment type="function">
    <text>Has antimicrobial activity against E.coli and activates ion channel activity.</text>
</comment>
<comment type="subcellular location">
    <subcellularLocation>
        <location>Secreted</location>
    </subcellularLocation>
</comment>
<comment type="mass spectrometry" mass="3701.0" method="Electrospray" evidence="1"/>
<comment type="similarity">
    <text evidence="2">Belongs to the alpha-defensin family.</text>
</comment>
<reference key="1">
    <citation type="journal article" date="1996" name="J. Biol. Chem.">
        <title>The isolation and characterization of a novel corticostatin/defensin-like peptide from the kidney.</title>
        <authorList>
            <person name="Bateman A."/>
            <person name="MacLeod R.J."/>
            <person name="Lembessis P."/>
            <person name="Hu J."/>
            <person name="Esch F."/>
            <person name="Solomon S."/>
        </authorList>
    </citation>
    <scope>PROTEIN SEQUENCE</scope>
    <scope>MASS SPECTROMETRY</scope>
    <source>
        <tissue>Kidney</tissue>
    </source>
</reference>
<reference key="2">
    <citation type="journal article" date="2000" name="Biochemistry">
        <title>Three-dimensional structure of RK-1: a novel alpha-defensin peptide.</title>
        <authorList>
            <person name="McManus A.M."/>
            <person name="Dawson N.F."/>
            <person name="Wade J.D."/>
            <person name="Carrington L.E."/>
            <person name="Winzor D.J."/>
            <person name="Craik D.J."/>
        </authorList>
    </citation>
    <scope>STRUCTURE BY NMR</scope>
</reference>
<sequence length="32" mass="3707">MPCSCKKYCDPWEVIDGSCGLFNSKYICCREK</sequence>
<keyword id="KW-0002">3D-structure</keyword>
<keyword id="KW-0044">Antibiotic</keyword>
<keyword id="KW-0929">Antimicrobial</keyword>
<keyword id="KW-0211">Defensin</keyword>
<keyword id="KW-0903">Direct protein sequencing</keyword>
<keyword id="KW-1015">Disulfide bond</keyword>
<keyword id="KW-1185">Reference proteome</keyword>
<keyword id="KW-0964">Secreted</keyword>
<feature type="peptide" id="PRO_0000044720" description="Corticostatin-related peptide RK-1">
    <location>
        <begin position="1"/>
        <end position="32"/>
    </location>
</feature>
<feature type="disulfide bond">
    <location>
        <begin position="3"/>
        <end position="29"/>
    </location>
</feature>
<feature type="disulfide bond">
    <location>
        <begin position="5"/>
        <end position="19"/>
    </location>
</feature>
<feature type="disulfide bond">
    <location>
        <begin position="9"/>
        <end position="28"/>
    </location>
</feature>
<feature type="strand" evidence="3">
    <location>
        <begin position="3"/>
        <end position="8"/>
    </location>
</feature>
<feature type="strand" evidence="3">
    <location>
        <begin position="13"/>
        <end position="17"/>
    </location>
</feature>
<feature type="strand" evidence="3">
    <location>
        <begin position="20"/>
        <end position="23"/>
    </location>
</feature>
<feature type="strand" evidence="3">
    <location>
        <begin position="25"/>
        <end position="30"/>
    </location>
</feature>